<evidence type="ECO:0000250" key="1">
    <source>
        <dbReference type="UniProtKB" id="O60563"/>
    </source>
</evidence>
<evidence type="ECO:0000255" key="2"/>
<evidence type="ECO:0000256" key="3">
    <source>
        <dbReference type="SAM" id="MobiDB-lite"/>
    </source>
</evidence>
<evidence type="ECO:0000305" key="4"/>
<evidence type="ECO:0007829" key="5">
    <source>
        <dbReference type="PDB" id="2W2H"/>
    </source>
</evidence>
<name>CCNT1_HORSE</name>
<reference key="1">
    <citation type="journal article" date="1999" name="Mol. Cell. Biol.">
        <title>Highly divergent lentiviral Tat proteins activate viral gene expression by a common mechanism.</title>
        <authorList>
            <person name="Bieniasz P.D."/>
            <person name="Grdina T.A."/>
            <person name="Bogerd H.P."/>
            <person name="Cullen B.R."/>
        </authorList>
    </citation>
    <scope>NUCLEOTIDE SEQUENCE [MRNA]</scope>
    <scope>INTERACTION WITH EIAV TAT</scope>
    <source>
        <tissue>Fibroblast</tissue>
    </source>
</reference>
<reference key="2">
    <citation type="journal article" date="2000" name="J. Virol.">
        <title>Interactions between equine cyclin T1, Tat, and TAR are disrupted by a leucine-to-valine substitution found in human cyclin T1.</title>
        <authorList>
            <person name="Taube R."/>
            <person name="Fujinaga K."/>
            <person name="Irwin D."/>
            <person name="Wimmer J."/>
            <person name="Geyer M."/>
            <person name="Peterlin B.M."/>
        </authorList>
    </citation>
    <scope>NUCLEOTIDE SEQUENCE [MRNA]</scope>
</reference>
<reference key="3">
    <citation type="journal article" date="2000" name="Virology">
        <title>An in vitro transcription system that recapitulates equine infectious anemia virus tat-mediated inhibition of human immunodeficiency virus type 1 Tat activity demonstrates a role for positive transcription elongation factor b and associated proteins in the mechanism of Tat activation.</title>
        <authorList>
            <person name="Sune C."/>
            <person name="Goldstrohm A.C."/>
            <person name="Peng J."/>
            <person name="Price D.H."/>
            <person name="Garcia-Blanco M.A."/>
        </authorList>
    </citation>
    <scope>IDENTIFICATION IN A COMPLEX WITH HTATSF1; P-TEFB AND RNA POL II</scope>
</reference>
<dbReference type="EMBL" id="AF137509">
    <property type="protein sequence ID" value="AAD38518.1"/>
    <property type="molecule type" value="mRNA"/>
</dbReference>
<dbReference type="EMBL" id="AF190905">
    <property type="protein sequence ID" value="AAF04138.1"/>
    <property type="molecule type" value="mRNA"/>
</dbReference>
<dbReference type="RefSeq" id="NP_001075315.2">
    <property type="nucleotide sequence ID" value="NM_001081846.2"/>
</dbReference>
<dbReference type="PDB" id="2W2H">
    <property type="method" value="X-ray"/>
    <property type="resolution" value="3.25 A"/>
    <property type="chains" value="A/B=5-267"/>
</dbReference>
<dbReference type="PDBsum" id="2W2H"/>
<dbReference type="SMR" id="Q9XT26"/>
<dbReference type="FunCoup" id="Q9XT26">
    <property type="interactions" value="3468"/>
</dbReference>
<dbReference type="STRING" id="9796.ENSECAP00000013646"/>
<dbReference type="PaxDb" id="9796-ENSECAP00000013646"/>
<dbReference type="GeneID" id="100033893"/>
<dbReference type="KEGG" id="ecb:100033893"/>
<dbReference type="CTD" id="904"/>
<dbReference type="HOGENOM" id="CLU_012994_1_0_1"/>
<dbReference type="InParanoid" id="Q9XT26"/>
<dbReference type="OrthoDB" id="25002at2759"/>
<dbReference type="TreeFam" id="TF101014"/>
<dbReference type="EvolutionaryTrace" id="Q9XT26"/>
<dbReference type="Proteomes" id="UP000002281">
    <property type="component" value="Unplaced"/>
</dbReference>
<dbReference type="GO" id="GO:0008024">
    <property type="term" value="C:cyclin/CDK positive transcription elongation factor complex"/>
    <property type="evidence" value="ECO:0000250"/>
    <property type="project" value="UniProtKB"/>
</dbReference>
<dbReference type="GO" id="GO:0005634">
    <property type="term" value="C:nucleus"/>
    <property type="evidence" value="ECO:0000250"/>
    <property type="project" value="UniProtKB"/>
</dbReference>
<dbReference type="GO" id="GO:0070691">
    <property type="term" value="C:P-TEFb complex"/>
    <property type="evidence" value="ECO:0000250"/>
    <property type="project" value="UniProtKB"/>
</dbReference>
<dbReference type="GO" id="GO:0097322">
    <property type="term" value="F:7SK snRNA binding"/>
    <property type="evidence" value="ECO:0000250"/>
    <property type="project" value="UniProtKB"/>
</dbReference>
<dbReference type="GO" id="GO:0061575">
    <property type="term" value="F:cyclin-dependent protein serine/threonine kinase activator activity"/>
    <property type="evidence" value="ECO:0000250"/>
    <property type="project" value="UniProtKB"/>
</dbReference>
<dbReference type="GO" id="GO:0140693">
    <property type="term" value="F:molecular condensate scaffold activity"/>
    <property type="evidence" value="ECO:0000250"/>
    <property type="project" value="UniProtKB"/>
</dbReference>
<dbReference type="GO" id="GO:0051301">
    <property type="term" value="P:cell division"/>
    <property type="evidence" value="ECO:0007669"/>
    <property type="project" value="UniProtKB-KW"/>
</dbReference>
<dbReference type="GO" id="GO:0032786">
    <property type="term" value="P:positive regulation of DNA-templated transcription, elongation"/>
    <property type="evidence" value="ECO:0000318"/>
    <property type="project" value="GO_Central"/>
</dbReference>
<dbReference type="GO" id="GO:0045944">
    <property type="term" value="P:positive regulation of transcription by RNA polymerase II"/>
    <property type="evidence" value="ECO:0000318"/>
    <property type="project" value="GO_Central"/>
</dbReference>
<dbReference type="GO" id="GO:0032968">
    <property type="term" value="P:positive regulation of transcription elongation by RNA polymerase II"/>
    <property type="evidence" value="ECO:0000250"/>
    <property type="project" value="UniProtKB"/>
</dbReference>
<dbReference type="CDD" id="cd20595">
    <property type="entry name" value="CYCLIN_CCNT1_rpt1"/>
    <property type="match status" value="1"/>
</dbReference>
<dbReference type="CDD" id="cd20597">
    <property type="entry name" value="CYCLIN_CCNT1_rpt2"/>
    <property type="match status" value="1"/>
</dbReference>
<dbReference type="FunFam" id="1.10.472.10:FF:000004">
    <property type="entry name" value="Cyclin T2"/>
    <property type="match status" value="1"/>
</dbReference>
<dbReference type="FunFam" id="1.10.472.10:FF:000009">
    <property type="entry name" value="cyclin-T2 isoform X1"/>
    <property type="match status" value="1"/>
</dbReference>
<dbReference type="Gene3D" id="1.10.472.10">
    <property type="entry name" value="Cyclin-like"/>
    <property type="match status" value="2"/>
</dbReference>
<dbReference type="InterPro" id="IPR013763">
    <property type="entry name" value="Cyclin-like_dom"/>
</dbReference>
<dbReference type="InterPro" id="IPR036915">
    <property type="entry name" value="Cyclin-like_sf"/>
</dbReference>
<dbReference type="InterPro" id="IPR043198">
    <property type="entry name" value="Cyclin/Ssn8"/>
</dbReference>
<dbReference type="InterPro" id="IPR047320">
    <property type="entry name" value="CYCLIN_CCNT1_rpt2"/>
</dbReference>
<dbReference type="InterPro" id="IPR006671">
    <property type="entry name" value="Cyclin_N"/>
</dbReference>
<dbReference type="PANTHER" id="PTHR10026">
    <property type="entry name" value="CYCLIN"/>
    <property type="match status" value="1"/>
</dbReference>
<dbReference type="Pfam" id="PF00134">
    <property type="entry name" value="Cyclin_N"/>
    <property type="match status" value="1"/>
</dbReference>
<dbReference type="Pfam" id="PF21797">
    <property type="entry name" value="CycT2-like_C"/>
    <property type="match status" value="1"/>
</dbReference>
<dbReference type="SMART" id="SM00385">
    <property type="entry name" value="CYCLIN"/>
    <property type="match status" value="1"/>
</dbReference>
<dbReference type="SUPFAM" id="SSF47954">
    <property type="entry name" value="Cyclin-like"/>
    <property type="match status" value="2"/>
</dbReference>
<proteinExistence type="evidence at protein level"/>
<gene>
    <name type="primary">CCNT1</name>
</gene>
<protein>
    <recommendedName>
        <fullName>Cyclin-T1</fullName>
        <shortName>CycT1</shortName>
        <shortName>Cyclin-T</shortName>
    </recommendedName>
</protein>
<organism>
    <name type="scientific">Equus caballus</name>
    <name type="common">Horse</name>
    <dbReference type="NCBI Taxonomy" id="9796"/>
    <lineage>
        <taxon>Eukaryota</taxon>
        <taxon>Metazoa</taxon>
        <taxon>Chordata</taxon>
        <taxon>Craniata</taxon>
        <taxon>Vertebrata</taxon>
        <taxon>Euteleostomi</taxon>
        <taxon>Mammalia</taxon>
        <taxon>Eutheria</taxon>
        <taxon>Laurasiatheria</taxon>
        <taxon>Perissodactyla</taxon>
        <taxon>Equidae</taxon>
        <taxon>Equus</taxon>
    </lineage>
</organism>
<feature type="chain" id="PRO_0000080492" description="Cyclin-T1">
    <location>
        <begin position="1"/>
        <end position="727"/>
    </location>
</feature>
<feature type="region of interest" description="Disordered" evidence="3">
    <location>
        <begin position="302"/>
        <end position="326"/>
    </location>
</feature>
<feature type="region of interest" description="Histidine-rich domain (HRD)" evidence="1">
    <location>
        <begin position="482"/>
        <end position="552"/>
    </location>
</feature>
<feature type="region of interest" description="Disordered" evidence="3">
    <location>
        <begin position="486"/>
        <end position="591"/>
    </location>
</feature>
<feature type="region of interest" description="Disordered" evidence="3">
    <location>
        <begin position="692"/>
        <end position="727"/>
    </location>
</feature>
<feature type="coiled-coil region" evidence="2">
    <location>
        <begin position="386"/>
        <end position="427"/>
    </location>
</feature>
<feature type="short sequence motif" description="Nuclear localization signal, and interaction with Tat-TAR RNA" evidence="2">
    <location>
        <begin position="253"/>
        <end position="270"/>
    </location>
</feature>
<feature type="compositionally biased region" description="Low complexity" evidence="3">
    <location>
        <begin position="302"/>
        <end position="322"/>
    </location>
</feature>
<feature type="compositionally biased region" description="Basic and acidic residues" evidence="3">
    <location>
        <begin position="486"/>
        <end position="508"/>
    </location>
</feature>
<feature type="compositionally biased region" description="Basic residues" evidence="3">
    <location>
        <begin position="509"/>
        <end position="532"/>
    </location>
</feature>
<feature type="compositionally biased region" description="Low complexity" evidence="3">
    <location>
        <begin position="562"/>
        <end position="572"/>
    </location>
</feature>
<feature type="compositionally biased region" description="Pro residues" evidence="3">
    <location>
        <begin position="711"/>
        <end position="727"/>
    </location>
</feature>
<feature type="modified residue" description="Phosphoserine" evidence="1">
    <location>
        <position position="117"/>
    </location>
</feature>
<feature type="modified residue" description="Phosphoserine" evidence="1">
    <location>
        <position position="390"/>
    </location>
</feature>
<feature type="modified residue" description="N6-acetyllysine" evidence="1">
    <location>
        <position position="392"/>
    </location>
</feature>
<feature type="modified residue" description="ADP-ribosylserine" evidence="1">
    <location>
        <position position="418"/>
    </location>
</feature>
<feature type="modified residue" description="ADP-ribosylserine" evidence="1">
    <location>
        <position position="476"/>
    </location>
</feature>
<feature type="modified residue" description="ADP-ribosylserine" evidence="1">
    <location>
        <position position="477"/>
    </location>
</feature>
<feature type="modified residue" description="N6-(ADP-ribosyl)lysine" evidence="1">
    <location>
        <position position="487"/>
    </location>
</feature>
<feature type="modified residue" description="ADP-ribosylhistidine" evidence="1">
    <location>
        <position position="489"/>
    </location>
</feature>
<feature type="modified residue" description="Phosphoserine" evidence="1">
    <location>
        <position position="497"/>
    </location>
</feature>
<feature type="modified residue" description="Phosphoserine" evidence="1">
    <location>
        <position position="501"/>
    </location>
</feature>
<feature type="modified residue" description="ADP-ribosylhistidine" evidence="1">
    <location>
        <position position="532"/>
    </location>
</feature>
<feature type="modified residue" description="ADP-ribosylserine" evidence="1">
    <location>
        <position position="533"/>
    </location>
</feature>
<feature type="modified residue" description="ADP-ribosylserine" evidence="1">
    <location>
        <position position="551"/>
    </location>
</feature>
<feature type="modified residue" description="ADP-ribosylserine" evidence="1">
    <location>
        <position position="554"/>
    </location>
</feature>
<feature type="modified residue" description="ADP-ribosylhistidine" evidence="1">
    <location>
        <position position="558"/>
    </location>
</feature>
<feature type="modified residue" description="ADP-ribosylserine" evidence="1">
    <location>
        <position position="565"/>
    </location>
</feature>
<feature type="modified residue" description="Phosphoserine" evidence="1">
    <location>
        <position position="566"/>
    </location>
</feature>
<feature type="cross-link" description="Glycyl lysine isopeptide (Lys-Gly) (interchain with G-Cter in SUMO2)" evidence="1">
    <location>
        <position position="343"/>
    </location>
</feature>
<feature type="cross-link" description="Glycyl lysine isopeptide (Lys-Gly) (interchain with G-Cter in SUMO2)" evidence="1">
    <location>
        <position position="417"/>
    </location>
</feature>
<feature type="cross-link" description="Glycyl lysine isopeptide (Lys-Gly) (interchain with G-Cter in SUMO2)" evidence="1">
    <location>
        <position position="483"/>
    </location>
</feature>
<feature type="sequence conflict" description="In Ref. 2; AAF04138." evidence="4" ref="2">
    <original>E</original>
    <variation>G</variation>
    <location>
        <position position="96"/>
    </location>
</feature>
<feature type="sequence conflict" description="In Ref. 2; AAF04138." evidence="4" ref="2">
    <original>R</original>
    <variation>W</variation>
    <location>
        <position position="256"/>
    </location>
</feature>
<feature type="sequence conflict" description="In Ref. 2; AAF04138." evidence="4" ref="2">
    <original>Q</original>
    <variation>E</variation>
    <location>
        <position position="262"/>
    </location>
</feature>
<feature type="sequence conflict" description="In Ref. 2; AAF04138." evidence="4" ref="2">
    <original>N</original>
    <variation>K</variation>
    <location>
        <position position="277"/>
    </location>
</feature>
<feature type="sequence conflict" description="In Ref. 2; AAF04138." evidence="4" ref="2">
    <original>I</original>
    <variation>T</variation>
    <location>
        <position position="359"/>
    </location>
</feature>
<feature type="sequence conflict" description="In Ref. 2; AAF04138." evidence="4" ref="2">
    <original>A</original>
    <variation>V</variation>
    <location>
        <position position="537"/>
    </location>
</feature>
<feature type="sequence conflict" description="In Ref. 2; AAF04138." evidence="4" ref="2">
    <original>A</original>
    <variation>T</variation>
    <location>
        <position position="681"/>
    </location>
</feature>
<feature type="sequence conflict" description="In Ref. 2; AAF04138." evidence="4" ref="2">
    <original>S</original>
    <variation>P</variation>
    <location>
        <position position="687"/>
    </location>
</feature>
<feature type="sequence conflict" description="In Ref. 2; AAF04138." evidence="4" ref="2">
    <original>M</original>
    <variation>I</variation>
    <location>
        <position position="699"/>
    </location>
</feature>
<feature type="sequence conflict" description="In Ref. 2; AAF04138." evidence="4" ref="2">
    <original>L</original>
    <variation>P</variation>
    <location>
        <position position="711"/>
    </location>
</feature>
<feature type="helix" evidence="5">
    <location>
        <begin position="10"/>
        <end position="12"/>
    </location>
</feature>
<feature type="turn" evidence="5">
    <location>
        <begin position="16"/>
        <end position="18"/>
    </location>
</feature>
<feature type="turn" evidence="5">
    <location>
        <begin position="23"/>
        <end position="25"/>
    </location>
</feature>
<feature type="strand" evidence="5">
    <location>
        <begin position="26"/>
        <end position="28"/>
    </location>
</feature>
<feature type="helix" evidence="5">
    <location>
        <begin position="31"/>
        <end position="52"/>
    </location>
</feature>
<feature type="helix" evidence="5">
    <location>
        <begin position="56"/>
        <end position="69"/>
    </location>
</feature>
<feature type="turn" evidence="5">
    <location>
        <begin position="75"/>
        <end position="77"/>
    </location>
</feature>
<feature type="helix" evidence="5">
    <location>
        <begin position="80"/>
        <end position="94"/>
    </location>
</feature>
<feature type="helix" evidence="5">
    <location>
        <begin position="101"/>
        <end position="112"/>
    </location>
</feature>
<feature type="helix" evidence="5">
    <location>
        <begin position="126"/>
        <end position="143"/>
    </location>
</feature>
<feature type="turn" evidence="5">
    <location>
        <begin position="144"/>
        <end position="146"/>
    </location>
</feature>
<feature type="helix" evidence="5">
    <location>
        <begin position="153"/>
        <end position="157"/>
    </location>
</feature>
<feature type="strand" evidence="5">
    <location>
        <begin position="160"/>
        <end position="164"/>
    </location>
</feature>
<feature type="helix" evidence="5">
    <location>
        <begin position="168"/>
        <end position="170"/>
    </location>
</feature>
<feature type="helix" evidence="5">
    <location>
        <begin position="175"/>
        <end position="178"/>
    </location>
</feature>
<feature type="turn" evidence="5">
    <location>
        <begin position="179"/>
        <end position="184"/>
    </location>
</feature>
<feature type="helix" evidence="5">
    <location>
        <begin position="186"/>
        <end position="189"/>
    </location>
</feature>
<feature type="helix" evidence="5">
    <location>
        <begin position="193"/>
        <end position="202"/>
    </location>
</feature>
<feature type="helix" evidence="5">
    <location>
        <begin position="204"/>
        <end position="207"/>
    </location>
</feature>
<feature type="turn" evidence="5">
    <location>
        <begin position="216"/>
        <end position="218"/>
    </location>
</feature>
<feature type="turn" evidence="5">
    <location>
        <begin position="221"/>
        <end position="225"/>
    </location>
</feature>
<feature type="helix" evidence="5">
    <location>
        <begin position="231"/>
        <end position="245"/>
    </location>
</feature>
<feature type="strand" evidence="5">
    <location>
        <begin position="246"/>
        <end position="248"/>
    </location>
</feature>
<feature type="strand" evidence="5">
    <location>
        <begin position="262"/>
        <end position="265"/>
    </location>
</feature>
<comment type="function">
    <text evidence="1">Regulatory subunit of the cyclin-dependent kinase pair (CDK9/cyclin-T1) complex, also called positive transcription elongation factor B (P-TEFb), which facilitates the transition from abortive to productive elongation by phosphorylating the CTD (C-terminal domain) of the large subunit of RNA polymerase II (RNA Pol II). Required to activate the protein kinase activity of CDK9: acts by mediating formation of liquid-liquid phase separation (LLPS) that enhances binding of P-TEFb to the CTD of RNA Pol II.</text>
</comment>
<comment type="subunit">
    <text evidence="1">Cyclin-T1 is the predominant cyclin that associates with CDK9 to form a heterodimer called P-TEFb (By similarity). P-TEFb forms a complex with AFF4/AF5Q31 (By similarity). Component of a complex which is at least composed of HTATSF1/Tat-SF1, P-TEFb complex, RNA pol II, SUPT5H, and NCL/nucleolin (By similarity). Component of the 7SK snRNP complex at least composed of P-TEFb (composed of CDK9 and CCNT1/cyclin-T1), HEXIM1, HEXIM2, BCDIN3, SART3 proteins and 7SK and U6 snRNAs (By similarity). Interacts (via central region) with ZMYND8 (via N-terminus); the interaction is direct and the association appears to occur between homodimeric ZMYND8 and the activated form of the P-TEFb complex (By similarity). Interacts with BRD4, targets chromatin binding (By similarity). Interacts with JMJD6 (By similarity). Interacts with MDFIC (By similarity). Interacts with HSF1. Interacts with HTATSF1 (By similarity). Interacts with TBX21 (By similarity).</text>
</comment>
<comment type="subcellular location">
    <subcellularLocation>
        <location evidence="1">Nucleus</location>
    </subcellularLocation>
</comment>
<comment type="domain">
    <text evidence="1">The histidine-rich domain (HRD) region is intrinsically disordered and promotes the formation of phase-separated liquid droplets that enhance binding of the P-TEFb complex to the CTD (C-terminal domain) of the large subunit of RNA polymerase II (RNA Pol II).</text>
</comment>
<comment type="PTM">
    <text evidence="1">ADP-ribosylation on serine residues by PARP1 in response to DNA damage disrupts the phase separation activity of CCNT1, thereby preventing activation of CDK9.</text>
</comment>
<comment type="similarity">
    <text evidence="4">Belongs to the cyclin family. Cyclin C subfamily.</text>
</comment>
<keyword id="KW-0002">3D-structure</keyword>
<keyword id="KW-0007">Acetylation</keyword>
<keyword id="KW-0013">ADP-ribosylation</keyword>
<keyword id="KW-0131">Cell cycle</keyword>
<keyword id="KW-0132">Cell division</keyword>
<keyword id="KW-0175">Coiled coil</keyword>
<keyword id="KW-0195">Cyclin</keyword>
<keyword id="KW-0945">Host-virus interaction</keyword>
<keyword id="KW-1017">Isopeptide bond</keyword>
<keyword id="KW-0539">Nucleus</keyword>
<keyword id="KW-0597">Phosphoprotein</keyword>
<keyword id="KW-1185">Reference proteome</keyword>
<keyword id="KW-0804">Transcription</keyword>
<keyword id="KW-0805">Transcription regulation</keyword>
<keyword id="KW-0832">Ubl conjugation</keyword>
<accession>Q9XT26</accession>
<accession>Q9TTX6</accession>
<sequence>MEGERKNNNKRWYFTREQLENSPSRRFGLDPDKELSYRQQAANLLQDMGQRLNVSQLTINTAIVYMHRFYMIQSFTQFHRNSVAPAALFLAAKVEEQPKKLEHVIKVAHACLHPQESLPDTRSEAYLQQVQDLVILESIILQTLGFELTIDHPHTHVVKCTQLVRASKDLAQTSYFMATNSLHLTTFSLQYTPPVVACVCIHLACKWSNWEIPVSTDGKHWWEYVDATVTLELLDELTHEFLQILEKTPNRLKRIRNWRACQAAKKTKADDRGTDENTSEQTILNMISQSSSDTTIAGLMSMSTSSTTSTVPSLPTTEESSSNLSGVEMLQGERWLSSQPPFKLEPAQGHRTSENLALIGVDHSLQQDGSNAFISQKQNSSKSVPSAKVSLKEYRAKHAEELAAQKRQLENMEANVKSQYAYAAQNLLSHHDSHSSVILKMPIEGSENPERPFLEKPDKTALKMRIPVASGDKAASSKPEEIKMRIKVHAAPDKHNSIDDSVTKSREHKEKHKTHPSNHHHHHNHHSHKHSHSQLPAGTGNKRPGDPKHSSQTSTLAHKTYSLSSSFSSSSSSRKRGPPEETGGALFDHPAKIAKSTKSSSINFFPPLPTMAQLPGHSSDTSGLPFSQPSCKTRVPHMKLDKGPTGANGHNTTQTIDYQDTVNMLHSLLHAQGVQPTQPPALEFVHSYGEYLNPRAGGMPSRSGNTDKPRLPPLPSEPPPPLPPLPK</sequence>